<proteinExistence type="evidence at protein level"/>
<gene>
    <name type="primary">HPS5</name>
    <name type="synonym">AIBP63</name>
    <name type="synonym">KIAA1017</name>
</gene>
<protein>
    <recommendedName>
        <fullName evidence="13">BLOC-2 complex member HPS5</fullName>
    </recommendedName>
    <alternativeName>
        <fullName>Alpha-integrin-binding protein 63</fullName>
    </alternativeName>
    <alternativeName>
        <fullName>Hermansky-Pudlak syndrome 5 protein</fullName>
    </alternativeName>
    <alternativeName>
        <fullName>Ruby-eye protein 2 homolog</fullName>
        <shortName>Ru2</shortName>
    </alternativeName>
</protein>
<comment type="function">
    <text evidence="6 7">May regulate the synthesis and function of lysosomes and of highly specialized organelles, such as melanosomes and platelet dense granules. Regulates intracellular vesicular trafficking in fibroblasts. May be involved in the regulation of general functions of integrins.</text>
</comment>
<comment type="subunit">
    <text evidence="2 5 8">Component of the biogenesis of lysosome-related organelles complex-2 (or BLOC2) composed of HPS3, HPS5 and HPS6. Interacts with HPS6 (PubMed:15030569, PubMed:25189619). Interacts with HPS3 (PubMed:15030569). May interact with all alpha-integrin chains that have an aromatic residue before the first lysine of the conserved KXGFFKR motif, including ITGA2, ITGA3, ITGA5 and ITGA6 (PubMed:10094488).</text>
</comment>
<comment type="interaction">
    <interactant intactId="EBI-10962552">
        <id>Q9UPZ3</id>
    </interactant>
    <interactant intactId="EBI-27055396">
        <id>A0A0H3NFP4</id>
        <label>sifA</label>
    </interactant>
    <organismsDiffer>true</organismsDiffer>
    <experiments>2</experiments>
</comment>
<comment type="subcellular location">
    <subcellularLocation>
        <location evidence="5">Cytoplasm</location>
        <location evidence="5">Cytosol</location>
    </subcellularLocation>
</comment>
<comment type="alternative products">
    <event type="alternative splicing"/>
    <isoform>
        <id>Q9UPZ3-1</id>
        <name>1</name>
        <sequence type="displayed"/>
    </isoform>
    <isoform>
        <id>Q9UPZ3-2</id>
        <name>2</name>
        <sequence type="described" ref="VSP_007035"/>
    </isoform>
</comment>
<comment type="tissue specificity">
    <text evidence="6">Widely expressed. Isoform 1:Highly expressed in lungs and testis. Isoform 2:Highly expressed in placenta, kidney, testis ovary, lung and thymus.</text>
</comment>
<comment type="disease" evidence="6">
    <disease id="DI-00561">
        <name>Hermansky-Pudlak syndrome 5</name>
        <acronym>HPS5</acronym>
        <description>A form of Hermansky-Pudlak syndrome, a genetically heterogeneous autosomal recessive disorder characterized by oculocutaneous albinism, bleeding due to platelet storage pool deficiency, and lysosomal storage defects. This syndrome results from defects of diverse cytoplasmic organelles including melanosomes, platelet dense granules and lysosomes. Ceroid storage in the lungs is associated with pulmonary fibrosis, a common cause of premature death in individuals with HPS.</description>
        <dbReference type="MIM" id="614074"/>
    </disease>
    <text>The disease is caused by variants affecting the gene represented in this entry.</text>
</comment>
<comment type="similarity">
    <text evidence="13">Belongs to the HPS5 family.</text>
</comment>
<comment type="sequence caution" evidence="13">
    <conflict type="erroneous initiation">
        <sequence resource="EMBL-CDS" id="BAA76861"/>
    </conflict>
</comment>
<dbReference type="EMBL" id="AF534400">
    <property type="protein sequence ID" value="AAO25962.1"/>
    <property type="molecule type" value="mRNA"/>
</dbReference>
<dbReference type="EMBL" id="AF534401">
    <property type="protein sequence ID" value="AAO25963.1"/>
    <property type="molecule type" value="mRNA"/>
</dbReference>
<dbReference type="EMBL" id="AF534402">
    <property type="protein sequence ID" value="AAO25964.1"/>
    <property type="molecule type" value="mRNA"/>
</dbReference>
<dbReference type="EMBL" id="AB023234">
    <property type="protein sequence ID" value="BAA76861.2"/>
    <property type="status" value="ALT_INIT"/>
    <property type="molecule type" value="mRNA"/>
</dbReference>
<dbReference type="EMBL" id="AK291663">
    <property type="protein sequence ID" value="BAF84352.1"/>
    <property type="molecule type" value="mRNA"/>
</dbReference>
<dbReference type="EMBL" id="AK292436">
    <property type="protein sequence ID" value="BAF85125.1"/>
    <property type="molecule type" value="mRNA"/>
</dbReference>
<dbReference type="EMBL" id="CH471064">
    <property type="protein sequence ID" value="EAW68402.1"/>
    <property type="molecule type" value="Genomic_DNA"/>
</dbReference>
<dbReference type="EMBL" id="CH471064">
    <property type="protein sequence ID" value="EAW68404.1"/>
    <property type="molecule type" value="Genomic_DNA"/>
</dbReference>
<dbReference type="EMBL" id="CH471064">
    <property type="protein sequence ID" value="EAW68405.1"/>
    <property type="molecule type" value="Genomic_DNA"/>
</dbReference>
<dbReference type="EMBL" id="CH471064">
    <property type="protein sequence ID" value="EAW68406.1"/>
    <property type="molecule type" value="Genomic_DNA"/>
</dbReference>
<dbReference type="EMBL" id="CH471064">
    <property type="protein sequence ID" value="EAW68407.1"/>
    <property type="molecule type" value="Genomic_DNA"/>
</dbReference>
<dbReference type="EMBL" id="BC033640">
    <property type="protein sequence ID" value="AAH33640.1"/>
    <property type="molecule type" value="mRNA"/>
</dbReference>
<dbReference type="EMBL" id="AJ131721">
    <property type="protein sequence ID" value="CAB38232.1"/>
    <property type="molecule type" value="mRNA"/>
</dbReference>
<dbReference type="CCDS" id="CCDS7836.1">
    <molecule id="Q9UPZ3-1"/>
</dbReference>
<dbReference type="CCDS" id="CCDS7837.1">
    <molecule id="Q9UPZ3-2"/>
</dbReference>
<dbReference type="RefSeq" id="NP_009147.3">
    <molecule id="Q9UPZ3-2"/>
    <property type="nucleotide sequence ID" value="NM_007216.3"/>
</dbReference>
<dbReference type="RefSeq" id="NP_852608.1">
    <molecule id="Q9UPZ3-1"/>
    <property type="nucleotide sequence ID" value="NM_181507.2"/>
</dbReference>
<dbReference type="RefSeq" id="NP_852609.1">
    <molecule id="Q9UPZ3-2"/>
    <property type="nucleotide sequence ID" value="NM_181508.1"/>
</dbReference>
<dbReference type="RefSeq" id="XP_016872638.1">
    <molecule id="Q9UPZ3-1"/>
    <property type="nucleotide sequence ID" value="XM_017017149.2"/>
</dbReference>
<dbReference type="RefSeq" id="XP_016872639.1">
    <molecule id="Q9UPZ3-1"/>
    <property type="nucleotide sequence ID" value="XM_017017150.2"/>
</dbReference>
<dbReference type="RefSeq" id="XP_016872643.1">
    <molecule id="Q9UPZ3-2"/>
    <property type="nucleotide sequence ID" value="XM_017017154.2"/>
</dbReference>
<dbReference type="RefSeq" id="XP_054188484.1">
    <molecule id="Q9UPZ3-1"/>
    <property type="nucleotide sequence ID" value="XM_054332509.1"/>
</dbReference>
<dbReference type="RefSeq" id="XP_054188485.1">
    <molecule id="Q9UPZ3-1"/>
    <property type="nucleotide sequence ID" value="XM_054332510.1"/>
</dbReference>
<dbReference type="RefSeq" id="XP_054188495.1">
    <molecule id="Q9UPZ3-2"/>
    <property type="nucleotide sequence ID" value="XM_054332520.1"/>
</dbReference>
<dbReference type="RefSeq" id="XP_054223526.1">
    <molecule id="Q9UPZ3-1"/>
    <property type="nucleotide sequence ID" value="XM_054367551.1"/>
</dbReference>
<dbReference type="RefSeq" id="XP_054223527.1">
    <molecule id="Q9UPZ3-1"/>
    <property type="nucleotide sequence ID" value="XM_054367552.1"/>
</dbReference>
<dbReference type="RefSeq" id="XP_054223537.1">
    <molecule id="Q9UPZ3-2"/>
    <property type="nucleotide sequence ID" value="XM_054367562.1"/>
</dbReference>
<dbReference type="SMR" id="Q9UPZ3"/>
<dbReference type="BioGRID" id="116399">
    <property type="interactions" value="52"/>
</dbReference>
<dbReference type="ComplexPortal" id="CPX-5044">
    <property type="entry name" value="BLOC-2 complex"/>
</dbReference>
<dbReference type="CORUM" id="Q9UPZ3"/>
<dbReference type="FunCoup" id="Q9UPZ3">
    <property type="interactions" value="1348"/>
</dbReference>
<dbReference type="IntAct" id="Q9UPZ3">
    <property type="interactions" value="41"/>
</dbReference>
<dbReference type="MINT" id="Q9UPZ3"/>
<dbReference type="STRING" id="9606.ENSP00000265967"/>
<dbReference type="GlyGen" id="Q9UPZ3">
    <property type="glycosylation" value="1 site, 1 O-linked glycan (1 site)"/>
</dbReference>
<dbReference type="iPTMnet" id="Q9UPZ3"/>
<dbReference type="PhosphoSitePlus" id="Q9UPZ3"/>
<dbReference type="BioMuta" id="HPS5"/>
<dbReference type="DMDM" id="29429222"/>
<dbReference type="jPOST" id="Q9UPZ3"/>
<dbReference type="MassIVE" id="Q9UPZ3"/>
<dbReference type="PaxDb" id="9606-ENSP00000265967"/>
<dbReference type="PeptideAtlas" id="Q9UPZ3"/>
<dbReference type="ProteomicsDB" id="85477">
    <molecule id="Q9UPZ3-1"/>
</dbReference>
<dbReference type="ProteomicsDB" id="85478">
    <molecule id="Q9UPZ3-2"/>
</dbReference>
<dbReference type="Pumba" id="Q9UPZ3"/>
<dbReference type="Antibodypedia" id="25002">
    <property type="antibodies" value="114 antibodies from 23 providers"/>
</dbReference>
<dbReference type="DNASU" id="11234"/>
<dbReference type="Ensembl" id="ENST00000349215.8">
    <molecule id="Q9UPZ3-1"/>
    <property type="protein sequence ID" value="ENSP00000265967.5"/>
    <property type="gene ID" value="ENSG00000110756.18"/>
</dbReference>
<dbReference type="Ensembl" id="ENST00000396253.7">
    <molecule id="Q9UPZ3-2"/>
    <property type="protein sequence ID" value="ENSP00000379552.3"/>
    <property type="gene ID" value="ENSG00000110756.18"/>
</dbReference>
<dbReference type="Ensembl" id="ENST00000438420.6">
    <molecule id="Q9UPZ3-2"/>
    <property type="protein sequence ID" value="ENSP00000399590.2"/>
    <property type="gene ID" value="ENSG00000110756.18"/>
</dbReference>
<dbReference type="Ensembl" id="ENST00000671838.2">
    <molecule id="Q9UPZ3-1"/>
    <property type="protein sequence ID" value="ENSP00000500370.1"/>
    <property type="gene ID" value="ENSG00000288445.2"/>
</dbReference>
<dbReference type="Ensembl" id="ENST00000672334.1">
    <molecule id="Q9UPZ3-2"/>
    <property type="protein sequence ID" value="ENSP00000500042.1"/>
    <property type="gene ID" value="ENSG00000288445.2"/>
</dbReference>
<dbReference type="Ensembl" id="ENST00000672413.1">
    <molecule id="Q9UPZ3-2"/>
    <property type="protein sequence ID" value="ENSP00000499956.1"/>
    <property type="gene ID" value="ENSG00000288445.2"/>
</dbReference>
<dbReference type="GeneID" id="11234"/>
<dbReference type="KEGG" id="hsa:11234"/>
<dbReference type="MANE-Select" id="ENST00000349215.8">
    <property type="protein sequence ID" value="ENSP00000265967.5"/>
    <property type="RefSeq nucleotide sequence ID" value="NM_181507.2"/>
    <property type="RefSeq protein sequence ID" value="NP_852608.1"/>
</dbReference>
<dbReference type="UCSC" id="uc001mod.2">
    <molecule id="Q9UPZ3-1"/>
    <property type="organism name" value="human"/>
</dbReference>
<dbReference type="AGR" id="HGNC:17022"/>
<dbReference type="CTD" id="11234"/>
<dbReference type="DisGeNET" id="11234"/>
<dbReference type="GeneCards" id="HPS5"/>
<dbReference type="GeneReviews" id="HPS5"/>
<dbReference type="HGNC" id="HGNC:17022">
    <property type="gene designation" value="HPS5"/>
</dbReference>
<dbReference type="HPA" id="ENSG00000110756">
    <property type="expression patterns" value="Tissue enhanced (liver)"/>
</dbReference>
<dbReference type="MalaCards" id="HPS5"/>
<dbReference type="MIM" id="607521">
    <property type="type" value="gene"/>
</dbReference>
<dbReference type="MIM" id="614074">
    <property type="type" value="phenotype"/>
</dbReference>
<dbReference type="neXtProt" id="NX_Q9UPZ3"/>
<dbReference type="OpenTargets" id="ENSG00000110756"/>
<dbReference type="Orphanet" id="231512">
    <property type="disease" value="Hermansky-Pudlak syndrome due to BLOC-2 deficiency"/>
</dbReference>
<dbReference type="PharmGKB" id="PA38432"/>
<dbReference type="VEuPathDB" id="HostDB:ENSG00000110756"/>
<dbReference type="eggNOG" id="KOG3621">
    <property type="taxonomic scope" value="Eukaryota"/>
</dbReference>
<dbReference type="GeneTree" id="ENSGT00940000155818"/>
<dbReference type="HOGENOM" id="CLU_008734_0_0_1"/>
<dbReference type="InParanoid" id="Q9UPZ3"/>
<dbReference type="OMA" id="EPQCMRR"/>
<dbReference type="OrthoDB" id="19493at2759"/>
<dbReference type="PAN-GO" id="Q9UPZ3">
    <property type="GO annotations" value="2 GO annotations based on evolutionary models"/>
</dbReference>
<dbReference type="PhylomeDB" id="Q9UPZ3"/>
<dbReference type="TreeFam" id="TF323607"/>
<dbReference type="PathwayCommons" id="Q9UPZ3"/>
<dbReference type="SignaLink" id="Q9UPZ3"/>
<dbReference type="SIGNOR" id="Q9UPZ3"/>
<dbReference type="BioGRID-ORCS" id="11234">
    <property type="hits" value="16 hits in 1161 CRISPR screens"/>
</dbReference>
<dbReference type="ChiTaRS" id="HPS5">
    <property type="organism name" value="human"/>
</dbReference>
<dbReference type="GeneWiki" id="HPS5"/>
<dbReference type="GenomeRNAi" id="11234"/>
<dbReference type="Pharos" id="Q9UPZ3">
    <property type="development level" value="Tbio"/>
</dbReference>
<dbReference type="PRO" id="PR:Q9UPZ3"/>
<dbReference type="Proteomes" id="UP000005640">
    <property type="component" value="Chromosome 11"/>
</dbReference>
<dbReference type="RNAct" id="Q9UPZ3">
    <property type="molecule type" value="protein"/>
</dbReference>
<dbReference type="Bgee" id="ENSG00000110756">
    <property type="expression patterns" value="Expressed in sural nerve and 107 other cell types or tissues"/>
</dbReference>
<dbReference type="ExpressionAtlas" id="Q9UPZ3">
    <property type="expression patterns" value="baseline and differential"/>
</dbReference>
<dbReference type="GO" id="GO:0031084">
    <property type="term" value="C:BLOC-2 complex"/>
    <property type="evidence" value="ECO:0000353"/>
    <property type="project" value="FlyBase"/>
</dbReference>
<dbReference type="GO" id="GO:0005737">
    <property type="term" value="C:cytoplasm"/>
    <property type="evidence" value="ECO:0000318"/>
    <property type="project" value="GO_Central"/>
</dbReference>
<dbReference type="GO" id="GO:0005829">
    <property type="term" value="C:cytosol"/>
    <property type="evidence" value="ECO:0000314"/>
    <property type="project" value="HPA"/>
</dbReference>
<dbReference type="GO" id="GO:0005769">
    <property type="term" value="C:early endosome"/>
    <property type="evidence" value="ECO:0000303"/>
    <property type="project" value="ComplexPortal"/>
</dbReference>
<dbReference type="GO" id="GO:0007596">
    <property type="term" value="P:blood coagulation"/>
    <property type="evidence" value="ECO:0007669"/>
    <property type="project" value="Ensembl"/>
</dbReference>
<dbReference type="GO" id="GO:0048066">
    <property type="term" value="P:developmental pigmentation"/>
    <property type="evidence" value="ECO:0000318"/>
    <property type="project" value="GO_Central"/>
</dbReference>
<dbReference type="GO" id="GO:0046907">
    <property type="term" value="P:intracellular transport"/>
    <property type="evidence" value="ECO:0000303"/>
    <property type="project" value="ComplexPortal"/>
</dbReference>
<dbReference type="GO" id="GO:1903232">
    <property type="term" value="P:melanosome assembly"/>
    <property type="evidence" value="ECO:0000303"/>
    <property type="project" value="ComplexPortal"/>
</dbReference>
<dbReference type="GO" id="GO:0060155">
    <property type="term" value="P:platelet dense granule organization"/>
    <property type="evidence" value="ECO:0000303"/>
    <property type="project" value="ComplexPortal"/>
</dbReference>
<dbReference type="FunFam" id="2.130.10.10:FF:000358">
    <property type="entry name" value="Hermansky-Pudlak syndrome 5 protein homolog"/>
    <property type="match status" value="1"/>
</dbReference>
<dbReference type="Gene3D" id="2.130.10.10">
    <property type="entry name" value="YVTN repeat-like/Quinoprotein amine dehydrogenase"/>
    <property type="match status" value="1"/>
</dbReference>
<dbReference type="InterPro" id="IPR056499">
    <property type="entry name" value="Beta-prop_HPS5-like"/>
</dbReference>
<dbReference type="InterPro" id="IPR035431">
    <property type="entry name" value="HPS5"/>
</dbReference>
<dbReference type="InterPro" id="IPR056445">
    <property type="entry name" value="TPR_HPS5"/>
</dbReference>
<dbReference type="InterPro" id="IPR015943">
    <property type="entry name" value="WD40/YVTN_repeat-like_dom_sf"/>
</dbReference>
<dbReference type="InterPro" id="IPR036322">
    <property type="entry name" value="WD40_repeat_dom_sf"/>
</dbReference>
<dbReference type="PANTHER" id="PTHR23287:SF18">
    <property type="entry name" value="BLOC-2 COMPLEX MEMBER HPS5"/>
    <property type="match status" value="1"/>
</dbReference>
<dbReference type="PANTHER" id="PTHR23287">
    <property type="entry name" value="RUBY-EYE2-LIKE PROTEIN"/>
    <property type="match status" value="1"/>
</dbReference>
<dbReference type="Pfam" id="PF23756">
    <property type="entry name" value="Beta-prop_HPS5"/>
    <property type="match status" value="1"/>
</dbReference>
<dbReference type="Pfam" id="PF23758">
    <property type="entry name" value="TPR_HPS5"/>
    <property type="match status" value="1"/>
</dbReference>
<dbReference type="PIRSF" id="PIRSF037475">
    <property type="entry name" value="BLOC-2_complex_Hps5"/>
    <property type="match status" value="1"/>
</dbReference>
<dbReference type="SUPFAM" id="SSF50978">
    <property type="entry name" value="WD40 repeat-like"/>
    <property type="match status" value="1"/>
</dbReference>
<reference key="1">
    <citation type="journal article" date="2003" name="Nat. Genet.">
        <title>Ru2 and Ru encode mouse orthologs of the genes mutated in human Hermansky-Pudlak syndrome types 5 and 6.</title>
        <authorList>
            <person name="Zhang Q."/>
            <person name="Zhao B."/>
            <person name="Li W."/>
            <person name="Oiso N."/>
            <person name="Novak E.K."/>
            <person name="Rusiniak M.E."/>
            <person name="Gautam R."/>
            <person name="Chintala S."/>
            <person name="O'Brien E.P."/>
            <person name="Zhang Y."/>
            <person name="Roe B.A."/>
            <person name="Elliott R.W."/>
            <person name="Eicher E.M."/>
            <person name="Liang P."/>
            <person name="Kratz C."/>
            <person name="Legius E."/>
            <person name="Spritz R.A."/>
            <person name="O'Sullivan T.N."/>
            <person name="Copeland N.G."/>
            <person name="Jenkins N.A."/>
            <person name="Swank R.T."/>
        </authorList>
    </citation>
    <scope>NUCLEOTIDE SEQUENCE [MRNA] (ISOFORMS 1 AND 2)</scope>
    <scope>VARIANT MET-417</scope>
    <scope>DISEASE</scope>
    <source>
        <tissue>Placenta</tissue>
    </source>
</reference>
<reference key="2">
    <citation type="journal article" date="1999" name="DNA Res.">
        <title>Prediction of the coding sequences of unidentified human genes. XIII. The complete sequences of 100 new cDNA clones from brain which code for large proteins in vitro.</title>
        <authorList>
            <person name="Nagase T."/>
            <person name="Ishikawa K."/>
            <person name="Suyama M."/>
            <person name="Kikuno R."/>
            <person name="Hirosawa M."/>
            <person name="Miyajima N."/>
            <person name="Tanaka A."/>
            <person name="Kotani H."/>
            <person name="Nomura N."/>
            <person name="Ohara O."/>
        </authorList>
    </citation>
    <scope>NUCLEOTIDE SEQUENCE [LARGE SCALE MRNA] (ISOFORM 2)</scope>
    <scope>VARIANT MET-417</scope>
    <source>
        <tissue>Brain</tissue>
    </source>
</reference>
<reference key="3">
    <citation type="journal article" date="2002" name="DNA Res.">
        <title>Construction of expression-ready cDNA clones for KIAA genes: manual curation of 330 KIAA cDNA clones.</title>
        <authorList>
            <person name="Nakajima D."/>
            <person name="Okazaki N."/>
            <person name="Yamakawa H."/>
            <person name="Kikuno R."/>
            <person name="Ohara O."/>
            <person name="Nagase T."/>
        </authorList>
    </citation>
    <scope>SEQUENCE REVISION</scope>
</reference>
<reference key="4">
    <citation type="journal article" date="2004" name="Nat. Genet.">
        <title>Complete sequencing and characterization of 21,243 full-length human cDNAs.</title>
        <authorList>
            <person name="Ota T."/>
            <person name="Suzuki Y."/>
            <person name="Nishikawa T."/>
            <person name="Otsuki T."/>
            <person name="Sugiyama T."/>
            <person name="Irie R."/>
            <person name="Wakamatsu A."/>
            <person name="Hayashi K."/>
            <person name="Sato H."/>
            <person name="Nagai K."/>
            <person name="Kimura K."/>
            <person name="Makita H."/>
            <person name="Sekine M."/>
            <person name="Obayashi M."/>
            <person name="Nishi T."/>
            <person name="Shibahara T."/>
            <person name="Tanaka T."/>
            <person name="Ishii S."/>
            <person name="Yamamoto J."/>
            <person name="Saito K."/>
            <person name="Kawai Y."/>
            <person name="Isono Y."/>
            <person name="Nakamura Y."/>
            <person name="Nagahari K."/>
            <person name="Murakami K."/>
            <person name="Yasuda T."/>
            <person name="Iwayanagi T."/>
            <person name="Wagatsuma M."/>
            <person name="Shiratori A."/>
            <person name="Sudo H."/>
            <person name="Hosoiri T."/>
            <person name="Kaku Y."/>
            <person name="Kodaira H."/>
            <person name="Kondo H."/>
            <person name="Sugawara M."/>
            <person name="Takahashi M."/>
            <person name="Kanda K."/>
            <person name="Yokoi T."/>
            <person name="Furuya T."/>
            <person name="Kikkawa E."/>
            <person name="Omura Y."/>
            <person name="Abe K."/>
            <person name="Kamihara K."/>
            <person name="Katsuta N."/>
            <person name="Sato K."/>
            <person name="Tanikawa M."/>
            <person name="Yamazaki M."/>
            <person name="Ninomiya K."/>
            <person name="Ishibashi T."/>
            <person name="Yamashita H."/>
            <person name="Murakawa K."/>
            <person name="Fujimori K."/>
            <person name="Tanai H."/>
            <person name="Kimata M."/>
            <person name="Watanabe M."/>
            <person name="Hiraoka S."/>
            <person name="Chiba Y."/>
            <person name="Ishida S."/>
            <person name="Ono Y."/>
            <person name="Takiguchi S."/>
            <person name="Watanabe S."/>
            <person name="Yosida M."/>
            <person name="Hotuta T."/>
            <person name="Kusano J."/>
            <person name="Kanehori K."/>
            <person name="Takahashi-Fujii A."/>
            <person name="Hara H."/>
            <person name="Tanase T.-O."/>
            <person name="Nomura Y."/>
            <person name="Togiya S."/>
            <person name="Komai F."/>
            <person name="Hara R."/>
            <person name="Takeuchi K."/>
            <person name="Arita M."/>
            <person name="Imose N."/>
            <person name="Musashino K."/>
            <person name="Yuuki H."/>
            <person name="Oshima A."/>
            <person name="Sasaki N."/>
            <person name="Aotsuka S."/>
            <person name="Yoshikawa Y."/>
            <person name="Matsunawa H."/>
            <person name="Ichihara T."/>
            <person name="Shiohata N."/>
            <person name="Sano S."/>
            <person name="Moriya S."/>
            <person name="Momiyama H."/>
            <person name="Satoh N."/>
            <person name="Takami S."/>
            <person name="Terashima Y."/>
            <person name="Suzuki O."/>
            <person name="Nakagawa S."/>
            <person name="Senoh A."/>
            <person name="Mizoguchi H."/>
            <person name="Goto Y."/>
            <person name="Shimizu F."/>
            <person name="Wakebe H."/>
            <person name="Hishigaki H."/>
            <person name="Watanabe T."/>
            <person name="Sugiyama A."/>
            <person name="Takemoto M."/>
            <person name="Kawakami B."/>
            <person name="Yamazaki M."/>
            <person name="Watanabe K."/>
            <person name="Kumagai A."/>
            <person name="Itakura S."/>
            <person name="Fukuzumi Y."/>
            <person name="Fujimori Y."/>
            <person name="Komiyama M."/>
            <person name="Tashiro H."/>
            <person name="Tanigami A."/>
            <person name="Fujiwara T."/>
            <person name="Ono T."/>
            <person name="Yamada K."/>
            <person name="Fujii Y."/>
            <person name="Ozaki K."/>
            <person name="Hirao M."/>
            <person name="Ohmori Y."/>
            <person name="Kawabata A."/>
            <person name="Hikiji T."/>
            <person name="Kobatake N."/>
            <person name="Inagaki H."/>
            <person name="Ikema Y."/>
            <person name="Okamoto S."/>
            <person name="Okitani R."/>
            <person name="Kawakami T."/>
            <person name="Noguchi S."/>
            <person name="Itoh T."/>
            <person name="Shigeta K."/>
            <person name="Senba T."/>
            <person name="Matsumura K."/>
            <person name="Nakajima Y."/>
            <person name="Mizuno T."/>
            <person name="Morinaga M."/>
            <person name="Sasaki M."/>
            <person name="Togashi T."/>
            <person name="Oyama M."/>
            <person name="Hata H."/>
            <person name="Watanabe M."/>
            <person name="Komatsu T."/>
            <person name="Mizushima-Sugano J."/>
            <person name="Satoh T."/>
            <person name="Shirai Y."/>
            <person name="Takahashi Y."/>
            <person name="Nakagawa K."/>
            <person name="Okumura K."/>
            <person name="Nagase T."/>
            <person name="Nomura N."/>
            <person name="Kikuchi H."/>
            <person name="Masuho Y."/>
            <person name="Yamashita R."/>
            <person name="Nakai K."/>
            <person name="Yada T."/>
            <person name="Nakamura Y."/>
            <person name="Ohara O."/>
            <person name="Isogai T."/>
            <person name="Sugano S."/>
        </authorList>
    </citation>
    <scope>NUCLEOTIDE SEQUENCE [LARGE SCALE MRNA] (ISOFORMS 1 AND 2)</scope>
    <source>
        <tissue>Placenta</tissue>
    </source>
</reference>
<reference key="5">
    <citation type="submission" date="2005-09" db="EMBL/GenBank/DDBJ databases">
        <authorList>
            <person name="Mural R.J."/>
            <person name="Istrail S."/>
            <person name="Sutton G.G."/>
            <person name="Florea L."/>
            <person name="Halpern A.L."/>
            <person name="Mobarry C.M."/>
            <person name="Lippert R."/>
            <person name="Walenz B."/>
            <person name="Shatkay H."/>
            <person name="Dew I."/>
            <person name="Miller J.R."/>
            <person name="Flanigan M.J."/>
            <person name="Edwards N.J."/>
            <person name="Bolanos R."/>
            <person name="Fasulo D."/>
            <person name="Halldorsson B.V."/>
            <person name="Hannenhalli S."/>
            <person name="Turner R."/>
            <person name="Yooseph S."/>
            <person name="Lu F."/>
            <person name="Nusskern D.R."/>
            <person name="Shue B.C."/>
            <person name="Zheng X.H."/>
            <person name="Zhong F."/>
            <person name="Delcher A.L."/>
            <person name="Huson D.H."/>
            <person name="Kravitz S.A."/>
            <person name="Mouchard L."/>
            <person name="Reinert K."/>
            <person name="Remington K.A."/>
            <person name="Clark A.G."/>
            <person name="Waterman M.S."/>
            <person name="Eichler E.E."/>
            <person name="Adams M.D."/>
            <person name="Hunkapiller M.W."/>
            <person name="Myers E.W."/>
            <person name="Venter J.C."/>
        </authorList>
    </citation>
    <scope>NUCLEOTIDE SEQUENCE [LARGE SCALE GENOMIC DNA]</scope>
</reference>
<reference key="6">
    <citation type="journal article" date="2004" name="Genome Res.">
        <title>The status, quality, and expansion of the NIH full-length cDNA project: the Mammalian Gene Collection (MGC).</title>
        <authorList>
            <consortium name="The MGC Project Team"/>
        </authorList>
    </citation>
    <scope>NUCLEOTIDE SEQUENCE [LARGE SCALE MRNA] (ISOFORM 2)</scope>
    <source>
        <tissue>Eye</tissue>
    </source>
</reference>
<reference key="7">
    <citation type="journal article" date="1999" name="FEBS Lett.">
        <title>Identification of novel interaction partners for the conserved membrane proximal region of alpha-integrin cytoplasmic domains.</title>
        <authorList>
            <person name="Wixler V."/>
            <person name="Laplantine E."/>
            <person name="Geerts D."/>
            <person name="Sonnenberg A."/>
            <person name="Petersohn D."/>
            <person name="Eckes B."/>
            <person name="Paulsson M."/>
            <person name="Aumailley M."/>
        </authorList>
    </citation>
    <scope>NUCLEOTIDE SEQUENCE [MRNA] OF 517-1129</scope>
    <scope>INTERACTION WITH ALPHA-INTEGRIN CHAINS</scope>
    <source>
        <tissue>Placenta</tissue>
    </source>
</reference>
<reference key="8">
    <citation type="journal article" date="2004" name="Traffic">
        <title>Characterization of BLOC-2, a complex containing the Hermansky-Pudlak syndrome proteins HPS3, HPS5 and HPS6.</title>
        <authorList>
            <person name="Di Pietro S.M."/>
            <person name="Falcon-Perez J.M."/>
            <person name="Dell'Angelica E.C."/>
        </authorList>
    </citation>
    <scope>INTERACTION WITH HPS6 AND HPS3</scope>
    <scope>SUBCELLULAR LOCATION</scope>
</reference>
<reference key="9">
    <citation type="journal article" date="2007" name="J. Invest. Dermatol.">
        <title>Improper trafficking of melanocyte-specific proteins in Hermansky-Pudlak syndrome type-5.</title>
        <authorList>
            <person name="Helip-Wooley A."/>
            <person name="Westbroek W."/>
            <person name="Dorward H.M."/>
            <person name="Koshoffer A."/>
            <person name="Huizing M."/>
            <person name="Boissy R.E."/>
            <person name="Gahl W.A."/>
        </authorList>
    </citation>
    <scope>FUNCTION</scope>
</reference>
<reference key="10">
    <citation type="journal article" date="2007" name="Science">
        <title>ATM and ATR substrate analysis reveals extensive protein networks responsive to DNA damage.</title>
        <authorList>
            <person name="Matsuoka S."/>
            <person name="Ballif B.A."/>
            <person name="Smogorzewska A."/>
            <person name="McDonald E.R. III"/>
            <person name="Hurov K.E."/>
            <person name="Luo J."/>
            <person name="Bakalarski C.E."/>
            <person name="Zhao Z."/>
            <person name="Solimini N."/>
            <person name="Lerenthal Y."/>
            <person name="Shiloh Y."/>
            <person name="Gygi S.P."/>
            <person name="Elledge S.J."/>
        </authorList>
    </citation>
    <scope>IDENTIFICATION BY MASS SPECTROMETRY [LARGE SCALE ANALYSIS]</scope>
    <source>
        <tissue>Embryonic kidney</tissue>
    </source>
</reference>
<reference key="11">
    <citation type="journal article" date="2008" name="J. Proteome Res.">
        <title>Combining protein-based IMAC, peptide-based IMAC, and MudPIT for efficient phosphoproteomic analysis.</title>
        <authorList>
            <person name="Cantin G.T."/>
            <person name="Yi W."/>
            <person name="Lu B."/>
            <person name="Park S.K."/>
            <person name="Xu T."/>
            <person name="Lee J.-D."/>
            <person name="Yates J.R. III"/>
        </authorList>
    </citation>
    <scope>IDENTIFICATION BY MASS SPECTROMETRY [LARGE SCALE ANALYSIS]</scope>
    <source>
        <tissue>Cervix carcinoma</tissue>
    </source>
</reference>
<reference key="12">
    <citation type="journal article" date="2008" name="Proc. Natl. Acad. Sci. U.S.A.">
        <title>A quantitative atlas of mitotic phosphorylation.</title>
        <authorList>
            <person name="Dephoure N."/>
            <person name="Zhou C."/>
            <person name="Villen J."/>
            <person name="Beausoleil S.A."/>
            <person name="Bakalarski C.E."/>
            <person name="Elledge S.J."/>
            <person name="Gygi S.P."/>
        </authorList>
    </citation>
    <scope>IDENTIFICATION BY MASS SPECTROMETRY [LARGE SCALE ANALYSIS]</scope>
    <source>
        <tissue>Cervix carcinoma</tissue>
    </source>
</reference>
<reference key="13">
    <citation type="journal article" date="2009" name="Sci. Signal.">
        <title>Quantitative phosphoproteomic analysis of T cell receptor signaling reveals system-wide modulation of protein-protein interactions.</title>
        <authorList>
            <person name="Mayya V."/>
            <person name="Lundgren D.H."/>
            <person name="Hwang S.-I."/>
            <person name="Rezaul K."/>
            <person name="Wu L."/>
            <person name="Eng J.K."/>
            <person name="Rodionov V."/>
            <person name="Han D.K."/>
        </authorList>
    </citation>
    <scope>IDENTIFICATION BY MASS SPECTROMETRY [LARGE SCALE ANALYSIS]</scope>
    <source>
        <tissue>Leukemic T-cell</tissue>
    </source>
</reference>
<reference key="14">
    <citation type="journal article" date="2010" name="Sci. Signal.">
        <title>Quantitative phosphoproteomics reveals widespread full phosphorylation site occupancy during mitosis.</title>
        <authorList>
            <person name="Olsen J.V."/>
            <person name="Vermeulen M."/>
            <person name="Santamaria A."/>
            <person name="Kumar C."/>
            <person name="Miller M.L."/>
            <person name="Jensen L.J."/>
            <person name="Gnad F."/>
            <person name="Cox J."/>
            <person name="Jensen T.S."/>
            <person name="Nigg E.A."/>
            <person name="Brunak S."/>
            <person name="Mann M."/>
        </authorList>
    </citation>
    <scope>PHOSPHORYLATION [LARGE SCALE ANALYSIS] AT SER-532</scope>
    <scope>IDENTIFICATION BY MASS SPECTROMETRY [LARGE SCALE ANALYSIS]</scope>
    <source>
        <tissue>Cervix carcinoma</tissue>
    </source>
</reference>
<reference key="15">
    <citation type="journal article" date="2013" name="J. Proteome Res.">
        <title>Toward a comprehensive characterization of a human cancer cell phosphoproteome.</title>
        <authorList>
            <person name="Zhou H."/>
            <person name="Di Palma S."/>
            <person name="Preisinger C."/>
            <person name="Peng M."/>
            <person name="Polat A.N."/>
            <person name="Heck A.J."/>
            <person name="Mohammed S."/>
        </authorList>
    </citation>
    <scope>PHOSPHORYLATION [LARGE SCALE ANALYSIS] AT SER-534 AND SER-695</scope>
    <scope>IDENTIFICATION BY MASS SPECTROMETRY [LARGE SCALE ANALYSIS]</scope>
    <source>
        <tissue>Cervix carcinoma</tissue>
        <tissue>Erythroleukemia</tissue>
    </source>
</reference>
<reference key="16">
    <citation type="journal article" date="2014" name="J. Cell Sci.">
        <title>HPS6 interacts with dynactin p150Glued to mediate retrograde trafficking and maturation of lysosomes.</title>
        <authorList>
            <person name="Li K."/>
            <person name="Yang L."/>
            <person name="Zhang C."/>
            <person name="Niu Y."/>
            <person name="Li W."/>
            <person name="Liu J.J."/>
        </authorList>
    </citation>
    <scope>INTERACTION WITH HPS6</scope>
</reference>
<reference key="17">
    <citation type="journal article" date="2014" name="J. Proteomics">
        <title>An enzyme assisted RP-RPLC approach for in-depth analysis of human liver phosphoproteome.</title>
        <authorList>
            <person name="Bian Y."/>
            <person name="Song C."/>
            <person name="Cheng K."/>
            <person name="Dong M."/>
            <person name="Wang F."/>
            <person name="Huang J."/>
            <person name="Sun D."/>
            <person name="Wang L."/>
            <person name="Ye M."/>
            <person name="Zou H."/>
        </authorList>
    </citation>
    <scope>PHOSPHORYLATION [LARGE SCALE ANALYSIS] AT SER-534</scope>
    <scope>IDENTIFICATION BY MASS SPECTROMETRY [LARGE SCALE ANALYSIS]</scope>
    <source>
        <tissue>Liver</tissue>
    </source>
</reference>
<reference key="18">
    <citation type="journal article" date="2004" name="Traffic">
        <title>Cellular, molecular and clinical characterization of patients with Hermansky-Pudlak syndrome type 5.</title>
        <authorList>
            <person name="Huizing M."/>
            <person name="Hess R."/>
            <person name="Dorward H."/>
            <person name="Claassen D.A."/>
            <person name="Helip-Wooley A."/>
            <person name="Kleta R."/>
            <person name="Kaiser-Kupfer M.I."/>
            <person name="White J.G."/>
            <person name="Gahl W.A."/>
        </authorList>
    </citation>
    <scope>VARIANTS HPS5 ARG-624 AND ILE-1098</scope>
    <scope>FUNCTION</scope>
    <scope>TISSUE SPECIFICITY</scope>
</reference>
<organism>
    <name type="scientific">Homo sapiens</name>
    <name type="common">Human</name>
    <dbReference type="NCBI Taxonomy" id="9606"/>
    <lineage>
        <taxon>Eukaryota</taxon>
        <taxon>Metazoa</taxon>
        <taxon>Chordata</taxon>
        <taxon>Craniata</taxon>
        <taxon>Vertebrata</taxon>
        <taxon>Euteleostomi</taxon>
        <taxon>Mammalia</taxon>
        <taxon>Eutheria</taxon>
        <taxon>Euarchontoglires</taxon>
        <taxon>Primates</taxon>
        <taxon>Haplorrhini</taxon>
        <taxon>Catarrhini</taxon>
        <taxon>Hominidae</taxon>
        <taxon>Homo</taxon>
    </lineage>
</organism>
<keyword id="KW-0015">Albinism</keyword>
<keyword id="KW-0025">Alternative splicing</keyword>
<keyword id="KW-0963">Cytoplasm</keyword>
<keyword id="KW-0225">Disease variant</keyword>
<keyword id="KW-0363">Hermansky-Pudlak syndrome</keyword>
<keyword id="KW-0597">Phosphoprotein</keyword>
<keyword id="KW-1267">Proteomics identification</keyword>
<keyword id="KW-1185">Reference proteome</keyword>
<name>HPS5_HUMAN</name>
<sequence>MAFVPVIPESYSHVLAEFESLDPLLSALRLDSSRLKCTSIAVSRKWLALGSSGGGLHLIQKEGWKHRLFLSHREGAISQVACCLHDDDYVAVATSQGLVVVWELNQERRGKPEQMYVSSEHKGRRVTALCWDTAILRVFVGDHAGKVSAIKLNTSKQAKAAAAFVMFPVQTITTVDSCVVQLDYLDGRLLISSLTRSFLCDTEREKFWKIGNKERDGEYGACFFPGRCSGGQQPLIYCARPGSRMWEVNFDGEVISTHQFKKLLSLPPLPVITLRSEPQYDHTAGSSQSLSFPKLLHLSEHCVLTWTERGIYIFIPQNVQVLLWSEVKDIQDVAVCRNELFCLHLNGKVSHLSLISVERCVERLLRRGLWNLAARTCCLFQNSVIASRARKTLTADKLEHLKSQLDHGTYNDLISQLEELILKFEPLDSACSSRRSSISSHESFSILDSGIYRIISSRRGSQSDEDSCSLHSQTLSEDERFKEFTSQQEEDLPDQCCGSHGNEDNVSHAPVMFETDKNETFLPFGIPLPFRSPSPLVSLQAVKESVSSFVRKTTEKIGTLHTSPDLKVRPELRGDEQSCEEDVSSDTCPKEEDTEEEKEVTSPPPEEDRFQELKVATAEAMTKLQDPLVLFESESLRMVLQEWLSHLEKTFAMKDFSGVSDTDNSSMKLNQDVLLVNESKKGILDEDNEKEKRDSLGNEESVDKTACECVRSPRESLDDLFQICSPCAIASGLRNDLAELTTLCLELNVLNSKIKSTSGHVDHTLQQYSPEILACQFLKKYFFLLNLKRAKESIKLSYSNSPSVWDTFIEGLKEMASSNPVYMEMEKGDLPTRLKLLDDEVPFDSPLLVVYATRLYEKFGESALRSLIKFFPSILPSDIIQLCHHHPAEFLAYLDSLVKSRPEDQRSSFLESLLQPESLRLDWLLLAVSLDAPPSTSTMDDEGYPRPHSHLLSWGYSQLILHLIKLPADFITKEKMTDICRSCGFWPGYLILCLELERRREAFTNIVYLNDMSLMEGDNGWIPETVEEWKLLLHLIQSKSTRPAPQESLNGSLSDGPSPINVENVALLLAKAMGPDRAWSLLQECGLALELSEKFTRTCDILRIAEKRQRALIQSMLEKCDRFLWSQQA</sequence>
<feature type="chain" id="PRO_0000084054" description="BLOC-2 complex member HPS5">
    <location>
        <begin position="1"/>
        <end position="1129"/>
    </location>
</feature>
<feature type="region of interest" description="Disordered" evidence="1">
    <location>
        <begin position="483"/>
        <end position="503"/>
    </location>
</feature>
<feature type="region of interest" description="Disordered" evidence="1">
    <location>
        <begin position="561"/>
        <end position="609"/>
    </location>
</feature>
<feature type="compositionally biased region" description="Basic and acidic residues" evidence="1">
    <location>
        <begin position="564"/>
        <end position="576"/>
    </location>
</feature>
<feature type="modified residue" description="Phosphoserine" evidence="14">
    <location>
        <position position="532"/>
    </location>
</feature>
<feature type="modified residue" description="Phosphoserine" evidence="15 16">
    <location>
        <position position="534"/>
    </location>
</feature>
<feature type="modified residue" description="Phosphoserine" evidence="15">
    <location>
        <position position="695"/>
    </location>
</feature>
<feature type="splice variant" id="VSP_007035" description="In isoform 2." evidence="9 10 11 12">
    <location>
        <begin position="1"/>
        <end position="114"/>
    </location>
</feature>
<feature type="sequence variant" id="VAR_015513" description="In dbSNP:rs7128017." evidence="3 4">
    <original>L</original>
    <variation>M</variation>
    <location>
        <position position="417"/>
    </location>
</feature>
<feature type="sequence variant" id="VAR_062285" description="In HPS5; dbSNP:rs281865102." evidence="6">
    <original>L</original>
    <variation>R</variation>
    <location>
        <position position="624"/>
    </location>
</feature>
<feature type="sequence variant" id="VAR_062286" description="In HPS5; dbSNP:rs61884288." evidence="6">
    <original>T</original>
    <variation>I</variation>
    <location>
        <position position="1098"/>
    </location>
</feature>
<feature type="sequence conflict" description="In Ref. 4; BAF84352." evidence="13" ref="4">
    <original>L</original>
    <variation>P</variation>
    <location>
        <position position="70"/>
    </location>
</feature>
<feature type="sequence conflict" description="In Ref. 4; BAF85125." evidence="13" ref="4">
    <original>C</original>
    <variation>R</variation>
    <location>
        <position position="588"/>
    </location>
</feature>
<feature type="sequence conflict" description="In Ref. 4; AAH33640." evidence="13" ref="4">
    <original>E</original>
    <variation>K</variation>
    <location>
        <position position="1016"/>
    </location>
</feature>
<accession>Q9UPZ3</accession>
<accession>A8K6J8</accession>
<accession>A8K8S1</accession>
<accession>D3DQX9</accession>
<accession>D3DQY0</accession>
<accession>O95942</accession>
<accession>Q8N4U0</accession>
<evidence type="ECO:0000256" key="1">
    <source>
        <dbReference type="SAM" id="MobiDB-lite"/>
    </source>
</evidence>
<evidence type="ECO:0000269" key="2">
    <source>
    </source>
</evidence>
<evidence type="ECO:0000269" key="3">
    <source>
    </source>
</evidence>
<evidence type="ECO:0000269" key="4">
    <source>
    </source>
</evidence>
<evidence type="ECO:0000269" key="5">
    <source>
    </source>
</evidence>
<evidence type="ECO:0000269" key="6">
    <source>
    </source>
</evidence>
<evidence type="ECO:0000269" key="7">
    <source>
    </source>
</evidence>
<evidence type="ECO:0000269" key="8">
    <source>
    </source>
</evidence>
<evidence type="ECO:0000303" key="9">
    <source>
    </source>
</evidence>
<evidence type="ECO:0000303" key="10">
    <source>
    </source>
</evidence>
<evidence type="ECO:0000303" key="11">
    <source>
    </source>
</evidence>
<evidence type="ECO:0000303" key="12">
    <source>
    </source>
</evidence>
<evidence type="ECO:0000305" key="13"/>
<evidence type="ECO:0007744" key="14">
    <source>
    </source>
</evidence>
<evidence type="ECO:0007744" key="15">
    <source>
    </source>
</evidence>
<evidence type="ECO:0007744" key="16">
    <source>
    </source>
</evidence>